<comment type="function">
    <text>Acts as a regulator of the microfilament network governing cellularization of the embryo. Determines the timing of a key conformational transition in the cortical microfilament network: the proper coordination of membrane invagination and basal closure of the cells. To do this, bnk possibly physically links neighboring contractile units of the early cycle 14 microfilament network in a manner that prevents basal constriction until the proper stage has been reached. Bnk together with nullo and Sry-alpha may provide auxiliary functions, by acting both to stabilize a large and dynamic microfilament structure and regulate its functions.</text>
</comment>
<comment type="subcellular location">
    <subcellularLocation>
        <location>Cytoplasm</location>
        <location>Cytoskeleton</location>
    </subcellularLocation>
    <text>Colocalizes with the structural transitions in the microfilament network during cellularization. Association is observed only when the network assumes an aligned and tightly apposed hexagonal configuration.</text>
</comment>
<comment type="tissue specificity">
    <text>Restricted to the blastoderm.</text>
</comment>
<comment type="developmental stage">
    <text>Observed exclusively in the late syncytial and cellular blastoderm stages of development. Transcripts are first detected during nuclear division cycle 11. They reach a strong peak at cycle 14 and from then on gradually decline until they are no longer detectable at the end of cellularization.</text>
</comment>
<dbReference type="EMBL" id="U01035">
    <property type="protein sequence ID" value="AAC46467.1"/>
    <property type="molecule type" value="mRNA"/>
</dbReference>
<dbReference type="EMBL" id="AE014297">
    <property type="protein sequence ID" value="AAF57125.1"/>
    <property type="molecule type" value="Genomic_DNA"/>
</dbReference>
<dbReference type="PIR" id="A49072">
    <property type="entry name" value="A49072"/>
</dbReference>
<dbReference type="RefSeq" id="NP_524604.2">
    <property type="nucleotide sequence ID" value="NM_079865.4"/>
</dbReference>
<dbReference type="SMR" id="P40794"/>
<dbReference type="BioGRID" id="68532">
    <property type="interactions" value="1"/>
</dbReference>
<dbReference type="IntAct" id="P40794">
    <property type="interactions" value="2"/>
</dbReference>
<dbReference type="MINT" id="P40794"/>
<dbReference type="STRING" id="7227.FBpp0085116"/>
<dbReference type="PaxDb" id="7227-FBpp0085116"/>
<dbReference type="DNASU" id="43687"/>
<dbReference type="EnsemblMetazoa" id="FBtr0085754">
    <property type="protein sequence ID" value="FBpp0085116"/>
    <property type="gene ID" value="FBgn0004389"/>
</dbReference>
<dbReference type="GeneID" id="43687"/>
<dbReference type="KEGG" id="dme:Dmel_CG1480"/>
<dbReference type="UCSC" id="CG1480-RA">
    <property type="organism name" value="d. melanogaster"/>
</dbReference>
<dbReference type="AGR" id="FB:FBgn0004389"/>
<dbReference type="CTD" id="43687"/>
<dbReference type="FlyBase" id="FBgn0004389">
    <property type="gene designation" value="bnk"/>
</dbReference>
<dbReference type="VEuPathDB" id="VectorBase:FBgn0004389"/>
<dbReference type="eggNOG" id="ENOG502T7TU">
    <property type="taxonomic scope" value="Eukaryota"/>
</dbReference>
<dbReference type="HOGENOM" id="CLU_906945_0_0_1"/>
<dbReference type="InParanoid" id="P40794"/>
<dbReference type="OMA" id="QRHAMME"/>
<dbReference type="OrthoDB" id="8014239at2759"/>
<dbReference type="PhylomeDB" id="P40794"/>
<dbReference type="BioGRID-ORCS" id="43687">
    <property type="hits" value="0 hits in 1 CRISPR screen"/>
</dbReference>
<dbReference type="GenomeRNAi" id="43687"/>
<dbReference type="PRO" id="PR:P40794"/>
<dbReference type="Proteomes" id="UP000000803">
    <property type="component" value="Chromosome 3R"/>
</dbReference>
<dbReference type="Bgee" id="FBgn0004389">
    <property type="expression patterns" value="Expressed in copper cell (Drosophila) in digestive tract and 7 other cell types or tissues"/>
</dbReference>
<dbReference type="ExpressionAtlas" id="P40794">
    <property type="expression patterns" value="baseline"/>
</dbReference>
<dbReference type="GO" id="GO:0005884">
    <property type="term" value="C:actin filament"/>
    <property type="evidence" value="ECO:0000314"/>
    <property type="project" value="FlyBase"/>
</dbReference>
<dbReference type="GO" id="GO:0005737">
    <property type="term" value="C:cytoplasm"/>
    <property type="evidence" value="ECO:0007669"/>
    <property type="project" value="UniProtKB-KW"/>
</dbReference>
<dbReference type="GO" id="GO:0051015">
    <property type="term" value="F:actin filament binding"/>
    <property type="evidence" value="ECO:0000314"/>
    <property type="project" value="FlyBase"/>
</dbReference>
<dbReference type="GO" id="GO:0005547">
    <property type="term" value="F:phosphatidylinositol-3,4,5-trisphosphate binding"/>
    <property type="evidence" value="ECO:0000314"/>
    <property type="project" value="FlyBase"/>
</dbReference>
<dbReference type="GO" id="GO:0005546">
    <property type="term" value="F:phosphatidylinositol-4,5-bisphosphate binding"/>
    <property type="evidence" value="ECO:0000314"/>
    <property type="project" value="FlyBase"/>
</dbReference>
<dbReference type="GO" id="GO:0051017">
    <property type="term" value="P:actin filament bundle assembly"/>
    <property type="evidence" value="ECO:0000314"/>
    <property type="project" value="FlyBase"/>
</dbReference>
<dbReference type="GO" id="GO:0061572">
    <property type="term" value="P:actin filament bundle organization"/>
    <property type="evidence" value="ECO:0000314"/>
    <property type="project" value="FlyBase"/>
</dbReference>
<dbReference type="GO" id="GO:0007015">
    <property type="term" value="P:actin filament organization"/>
    <property type="evidence" value="ECO:0000304"/>
    <property type="project" value="FlyBase"/>
</dbReference>
<dbReference type="GO" id="GO:0016476">
    <property type="term" value="P:regulation of embryonic cell shape"/>
    <property type="evidence" value="ECO:0000315"/>
    <property type="project" value="FlyBase"/>
</dbReference>
<dbReference type="GO" id="GO:0110069">
    <property type="term" value="P:syncytial embryo cellularization"/>
    <property type="evidence" value="ECO:0000315"/>
    <property type="project" value="FlyBase"/>
</dbReference>
<gene>
    <name type="primary">bnk</name>
    <name type="ORF">CG1480</name>
</gene>
<protein>
    <recommendedName>
        <fullName>Protein bottleneck</fullName>
    </recommendedName>
</protein>
<keyword id="KW-0963">Cytoplasm</keyword>
<keyword id="KW-0206">Cytoskeleton</keyword>
<keyword id="KW-0217">Developmental protein</keyword>
<keyword id="KW-1185">Reference proteome</keyword>
<evidence type="ECO:0000256" key="1">
    <source>
        <dbReference type="SAM" id="MobiDB-lite"/>
    </source>
</evidence>
<evidence type="ECO:0000305" key="2"/>
<reference key="1">
    <citation type="journal article" date="1993" name="Cell">
        <title>Bottleneck acts as a regulator of the microfilament network governing cellularization of the Drosophila embryo.</title>
        <authorList>
            <person name="Schejter E.D."/>
            <person name="Wieschaus E."/>
        </authorList>
    </citation>
    <scope>NUCLEOTIDE SEQUENCE</scope>
</reference>
<reference key="2">
    <citation type="journal article" date="2000" name="Science">
        <title>The genome sequence of Drosophila melanogaster.</title>
        <authorList>
            <person name="Adams M.D."/>
            <person name="Celniker S.E."/>
            <person name="Holt R.A."/>
            <person name="Evans C.A."/>
            <person name="Gocayne J.D."/>
            <person name="Amanatides P.G."/>
            <person name="Scherer S.E."/>
            <person name="Li P.W."/>
            <person name="Hoskins R.A."/>
            <person name="Galle R.F."/>
            <person name="George R.A."/>
            <person name="Lewis S.E."/>
            <person name="Richards S."/>
            <person name="Ashburner M."/>
            <person name="Henderson S.N."/>
            <person name="Sutton G.G."/>
            <person name="Wortman J.R."/>
            <person name="Yandell M.D."/>
            <person name="Zhang Q."/>
            <person name="Chen L.X."/>
            <person name="Brandon R.C."/>
            <person name="Rogers Y.-H.C."/>
            <person name="Blazej R.G."/>
            <person name="Champe M."/>
            <person name="Pfeiffer B.D."/>
            <person name="Wan K.H."/>
            <person name="Doyle C."/>
            <person name="Baxter E.G."/>
            <person name="Helt G."/>
            <person name="Nelson C.R."/>
            <person name="Miklos G.L.G."/>
            <person name="Abril J.F."/>
            <person name="Agbayani A."/>
            <person name="An H.-J."/>
            <person name="Andrews-Pfannkoch C."/>
            <person name="Baldwin D."/>
            <person name="Ballew R.M."/>
            <person name="Basu A."/>
            <person name="Baxendale J."/>
            <person name="Bayraktaroglu L."/>
            <person name="Beasley E.M."/>
            <person name="Beeson K.Y."/>
            <person name="Benos P.V."/>
            <person name="Berman B.P."/>
            <person name="Bhandari D."/>
            <person name="Bolshakov S."/>
            <person name="Borkova D."/>
            <person name="Botchan M.R."/>
            <person name="Bouck J."/>
            <person name="Brokstein P."/>
            <person name="Brottier P."/>
            <person name="Burtis K.C."/>
            <person name="Busam D.A."/>
            <person name="Butler H."/>
            <person name="Cadieu E."/>
            <person name="Center A."/>
            <person name="Chandra I."/>
            <person name="Cherry J.M."/>
            <person name="Cawley S."/>
            <person name="Dahlke C."/>
            <person name="Davenport L.B."/>
            <person name="Davies P."/>
            <person name="de Pablos B."/>
            <person name="Delcher A."/>
            <person name="Deng Z."/>
            <person name="Mays A.D."/>
            <person name="Dew I."/>
            <person name="Dietz S.M."/>
            <person name="Dodson K."/>
            <person name="Doup L.E."/>
            <person name="Downes M."/>
            <person name="Dugan-Rocha S."/>
            <person name="Dunkov B.C."/>
            <person name="Dunn P."/>
            <person name="Durbin K.J."/>
            <person name="Evangelista C.C."/>
            <person name="Ferraz C."/>
            <person name="Ferriera S."/>
            <person name="Fleischmann W."/>
            <person name="Fosler C."/>
            <person name="Gabrielian A.E."/>
            <person name="Garg N.S."/>
            <person name="Gelbart W.M."/>
            <person name="Glasser K."/>
            <person name="Glodek A."/>
            <person name="Gong F."/>
            <person name="Gorrell J.H."/>
            <person name="Gu Z."/>
            <person name="Guan P."/>
            <person name="Harris M."/>
            <person name="Harris N.L."/>
            <person name="Harvey D.A."/>
            <person name="Heiman T.J."/>
            <person name="Hernandez J.R."/>
            <person name="Houck J."/>
            <person name="Hostin D."/>
            <person name="Houston K.A."/>
            <person name="Howland T.J."/>
            <person name="Wei M.-H."/>
            <person name="Ibegwam C."/>
            <person name="Jalali M."/>
            <person name="Kalush F."/>
            <person name="Karpen G.H."/>
            <person name="Ke Z."/>
            <person name="Kennison J.A."/>
            <person name="Ketchum K.A."/>
            <person name="Kimmel B.E."/>
            <person name="Kodira C.D."/>
            <person name="Kraft C.L."/>
            <person name="Kravitz S."/>
            <person name="Kulp D."/>
            <person name="Lai Z."/>
            <person name="Lasko P."/>
            <person name="Lei Y."/>
            <person name="Levitsky A.A."/>
            <person name="Li J.H."/>
            <person name="Li Z."/>
            <person name="Liang Y."/>
            <person name="Lin X."/>
            <person name="Liu X."/>
            <person name="Mattei B."/>
            <person name="McIntosh T.C."/>
            <person name="McLeod M.P."/>
            <person name="McPherson D."/>
            <person name="Merkulov G."/>
            <person name="Milshina N.V."/>
            <person name="Mobarry C."/>
            <person name="Morris J."/>
            <person name="Moshrefi A."/>
            <person name="Mount S.M."/>
            <person name="Moy M."/>
            <person name="Murphy B."/>
            <person name="Murphy L."/>
            <person name="Muzny D.M."/>
            <person name="Nelson D.L."/>
            <person name="Nelson D.R."/>
            <person name="Nelson K.A."/>
            <person name="Nixon K."/>
            <person name="Nusskern D.R."/>
            <person name="Pacleb J.M."/>
            <person name="Palazzolo M."/>
            <person name="Pittman G.S."/>
            <person name="Pan S."/>
            <person name="Pollard J."/>
            <person name="Puri V."/>
            <person name="Reese M.G."/>
            <person name="Reinert K."/>
            <person name="Remington K."/>
            <person name="Saunders R.D.C."/>
            <person name="Scheeler F."/>
            <person name="Shen H."/>
            <person name="Shue B.C."/>
            <person name="Siden-Kiamos I."/>
            <person name="Simpson M."/>
            <person name="Skupski M.P."/>
            <person name="Smith T.J."/>
            <person name="Spier E."/>
            <person name="Spradling A.C."/>
            <person name="Stapleton M."/>
            <person name="Strong R."/>
            <person name="Sun E."/>
            <person name="Svirskas R."/>
            <person name="Tector C."/>
            <person name="Turner R."/>
            <person name="Venter E."/>
            <person name="Wang A.H."/>
            <person name="Wang X."/>
            <person name="Wang Z.-Y."/>
            <person name="Wassarman D.A."/>
            <person name="Weinstock G.M."/>
            <person name="Weissenbach J."/>
            <person name="Williams S.M."/>
            <person name="Woodage T."/>
            <person name="Worley K.C."/>
            <person name="Wu D."/>
            <person name="Yang S."/>
            <person name="Yao Q.A."/>
            <person name="Ye J."/>
            <person name="Yeh R.-F."/>
            <person name="Zaveri J.S."/>
            <person name="Zhan M."/>
            <person name="Zhang G."/>
            <person name="Zhao Q."/>
            <person name="Zheng L."/>
            <person name="Zheng X.H."/>
            <person name="Zhong F.N."/>
            <person name="Zhong W."/>
            <person name="Zhou X."/>
            <person name="Zhu S.C."/>
            <person name="Zhu X."/>
            <person name="Smith H.O."/>
            <person name="Gibbs R.A."/>
            <person name="Myers E.W."/>
            <person name="Rubin G.M."/>
            <person name="Venter J.C."/>
        </authorList>
    </citation>
    <scope>NUCLEOTIDE SEQUENCE [LARGE SCALE GENOMIC DNA]</scope>
    <source>
        <strain>Berkeley</strain>
    </source>
</reference>
<reference key="3">
    <citation type="journal article" date="2002" name="Genome Biol.">
        <title>Annotation of the Drosophila melanogaster euchromatic genome: a systematic review.</title>
        <authorList>
            <person name="Misra S."/>
            <person name="Crosby M.A."/>
            <person name="Mungall C.J."/>
            <person name="Matthews B.B."/>
            <person name="Campbell K.S."/>
            <person name="Hradecky P."/>
            <person name="Huang Y."/>
            <person name="Kaminker J.S."/>
            <person name="Millburn G.H."/>
            <person name="Prochnik S.E."/>
            <person name="Smith C.D."/>
            <person name="Tupy J.L."/>
            <person name="Whitfield E.J."/>
            <person name="Bayraktaroglu L."/>
            <person name="Berman B.P."/>
            <person name="Bettencourt B.R."/>
            <person name="Celniker S.E."/>
            <person name="de Grey A.D.N.J."/>
            <person name="Drysdale R.A."/>
            <person name="Harris N.L."/>
            <person name="Richter J."/>
            <person name="Russo S."/>
            <person name="Schroeder A.J."/>
            <person name="Shu S.Q."/>
            <person name="Stapleton M."/>
            <person name="Yamada C."/>
            <person name="Ashburner M."/>
            <person name="Gelbart W.M."/>
            <person name="Rubin G.M."/>
            <person name="Lewis S.E."/>
        </authorList>
    </citation>
    <scope>GENOME REANNOTATION</scope>
    <source>
        <strain>Berkeley</strain>
    </source>
</reference>
<accession>P40794</accession>
<accession>Q9VA03</accession>
<name>BNK_DROME</name>
<sequence>MSISTFNFQFYNYKLSPSSPGFGSTASRSSSSCISELEMDIDEDMSAQPTITSTPKPRFTSQLAVELAKTEPGNGISPLRPKLHTAQKRWSMELREKVLEMSKRNNGQEKPQTARQQEQRQPQEQPLQQEELQHQQQEPTVTDKINFFNKLTNTFESGFSKLMPQASSTNNRFIAMLRTARPQNVATTTANSSTANSFLGSDHSLSGSVTGQVPPPKPKRLSATTAQFATPHVPAMGVGKGGSQRKCSLRRKPSMDKSRATISRQSSSASVRTQNHAIMEDLSLVVPVRLRIAEYEQRISMSA</sequence>
<proteinExistence type="evidence at transcript level"/>
<organism>
    <name type="scientific">Drosophila melanogaster</name>
    <name type="common">Fruit fly</name>
    <dbReference type="NCBI Taxonomy" id="7227"/>
    <lineage>
        <taxon>Eukaryota</taxon>
        <taxon>Metazoa</taxon>
        <taxon>Ecdysozoa</taxon>
        <taxon>Arthropoda</taxon>
        <taxon>Hexapoda</taxon>
        <taxon>Insecta</taxon>
        <taxon>Pterygota</taxon>
        <taxon>Neoptera</taxon>
        <taxon>Endopterygota</taxon>
        <taxon>Diptera</taxon>
        <taxon>Brachycera</taxon>
        <taxon>Muscomorpha</taxon>
        <taxon>Ephydroidea</taxon>
        <taxon>Drosophilidae</taxon>
        <taxon>Drosophila</taxon>
        <taxon>Sophophora</taxon>
    </lineage>
</organism>
<feature type="chain" id="PRO_0000064966" description="Protein bottleneck">
    <location>
        <begin position="1"/>
        <end position="303"/>
    </location>
</feature>
<feature type="region of interest" description="Disordered" evidence="1">
    <location>
        <begin position="102"/>
        <end position="142"/>
    </location>
</feature>
<feature type="region of interest" description="Disordered" evidence="1">
    <location>
        <begin position="185"/>
        <end position="272"/>
    </location>
</feature>
<feature type="compositionally biased region" description="Low complexity" evidence="1">
    <location>
        <begin position="115"/>
        <end position="138"/>
    </location>
</feature>
<feature type="compositionally biased region" description="Low complexity" evidence="1">
    <location>
        <begin position="185"/>
        <end position="197"/>
    </location>
</feature>
<feature type="compositionally biased region" description="Polar residues" evidence="1">
    <location>
        <begin position="260"/>
        <end position="272"/>
    </location>
</feature>
<feature type="sequence conflict" description="In Ref. 1; AAC46467." evidence="2" ref="1">
    <original>R</original>
    <variation>Q</variation>
    <location>
        <position position="115"/>
    </location>
</feature>